<proteinExistence type="inferred from homology"/>
<accession>B7NT62</accession>
<gene>
    <name evidence="1" type="primary">pheS</name>
    <name type="ordered locus">ECIAI39_1339</name>
</gene>
<organism>
    <name type="scientific">Escherichia coli O7:K1 (strain IAI39 / ExPEC)</name>
    <dbReference type="NCBI Taxonomy" id="585057"/>
    <lineage>
        <taxon>Bacteria</taxon>
        <taxon>Pseudomonadati</taxon>
        <taxon>Pseudomonadota</taxon>
        <taxon>Gammaproteobacteria</taxon>
        <taxon>Enterobacterales</taxon>
        <taxon>Enterobacteriaceae</taxon>
        <taxon>Escherichia</taxon>
    </lineage>
</organism>
<comment type="catalytic activity">
    <reaction evidence="1">
        <text>tRNA(Phe) + L-phenylalanine + ATP = L-phenylalanyl-tRNA(Phe) + AMP + diphosphate + H(+)</text>
        <dbReference type="Rhea" id="RHEA:19413"/>
        <dbReference type="Rhea" id="RHEA-COMP:9668"/>
        <dbReference type="Rhea" id="RHEA-COMP:9699"/>
        <dbReference type="ChEBI" id="CHEBI:15378"/>
        <dbReference type="ChEBI" id="CHEBI:30616"/>
        <dbReference type="ChEBI" id="CHEBI:33019"/>
        <dbReference type="ChEBI" id="CHEBI:58095"/>
        <dbReference type="ChEBI" id="CHEBI:78442"/>
        <dbReference type="ChEBI" id="CHEBI:78531"/>
        <dbReference type="ChEBI" id="CHEBI:456215"/>
        <dbReference type="EC" id="6.1.1.20"/>
    </reaction>
</comment>
<comment type="cofactor">
    <cofactor evidence="1">
        <name>Mg(2+)</name>
        <dbReference type="ChEBI" id="CHEBI:18420"/>
    </cofactor>
    <text evidence="1">Binds 2 magnesium ions per tetramer.</text>
</comment>
<comment type="subunit">
    <text evidence="1">Tetramer of two alpha and two beta subunits.</text>
</comment>
<comment type="subcellular location">
    <subcellularLocation>
        <location evidence="1">Cytoplasm</location>
    </subcellularLocation>
</comment>
<comment type="similarity">
    <text evidence="1">Belongs to the class-II aminoacyl-tRNA synthetase family. Phe-tRNA synthetase alpha subunit type 1 subfamily.</text>
</comment>
<reference key="1">
    <citation type="journal article" date="2009" name="PLoS Genet.">
        <title>Organised genome dynamics in the Escherichia coli species results in highly diverse adaptive paths.</title>
        <authorList>
            <person name="Touchon M."/>
            <person name="Hoede C."/>
            <person name="Tenaillon O."/>
            <person name="Barbe V."/>
            <person name="Baeriswyl S."/>
            <person name="Bidet P."/>
            <person name="Bingen E."/>
            <person name="Bonacorsi S."/>
            <person name="Bouchier C."/>
            <person name="Bouvet O."/>
            <person name="Calteau A."/>
            <person name="Chiapello H."/>
            <person name="Clermont O."/>
            <person name="Cruveiller S."/>
            <person name="Danchin A."/>
            <person name="Diard M."/>
            <person name="Dossat C."/>
            <person name="Karoui M.E."/>
            <person name="Frapy E."/>
            <person name="Garry L."/>
            <person name="Ghigo J.M."/>
            <person name="Gilles A.M."/>
            <person name="Johnson J."/>
            <person name="Le Bouguenec C."/>
            <person name="Lescat M."/>
            <person name="Mangenot S."/>
            <person name="Martinez-Jehanne V."/>
            <person name="Matic I."/>
            <person name="Nassif X."/>
            <person name="Oztas S."/>
            <person name="Petit M.A."/>
            <person name="Pichon C."/>
            <person name="Rouy Z."/>
            <person name="Ruf C.S."/>
            <person name="Schneider D."/>
            <person name="Tourret J."/>
            <person name="Vacherie B."/>
            <person name="Vallenet D."/>
            <person name="Medigue C."/>
            <person name="Rocha E.P.C."/>
            <person name="Denamur E."/>
        </authorList>
    </citation>
    <scope>NUCLEOTIDE SEQUENCE [LARGE SCALE GENOMIC DNA]</scope>
    <source>
        <strain>IAI39 / ExPEC</strain>
    </source>
</reference>
<name>SYFA_ECO7I</name>
<protein>
    <recommendedName>
        <fullName evidence="1">Phenylalanine--tRNA ligase alpha subunit</fullName>
        <ecNumber evidence="1">6.1.1.20</ecNumber>
    </recommendedName>
    <alternativeName>
        <fullName evidence="1">Phenylalanyl-tRNA synthetase alpha subunit</fullName>
        <shortName evidence="1">PheRS</shortName>
    </alternativeName>
</protein>
<feature type="chain" id="PRO_1000119394" description="Phenylalanine--tRNA ligase alpha subunit">
    <location>
        <begin position="1"/>
        <end position="327"/>
    </location>
</feature>
<feature type="binding site" evidence="1">
    <location>
        <position position="252"/>
    </location>
    <ligand>
        <name>Mg(2+)</name>
        <dbReference type="ChEBI" id="CHEBI:18420"/>
        <note>shared with beta subunit</note>
    </ligand>
</feature>
<sequence>MSHLAELVASAKAAISQASDVAALDNVRVEYLGKKGHLTLQMTTLRELPPEERPAAGAVINEAKEQVQQALNARKAELESAALNARLAAETIDVSLPGRRIENGGLHPVTRTIDRIESFFGELGFTVATGPEIEDDYHNFDALNIPGHHPARADHDTFWFDATRLLRTQTSGVQIRTMKAQQPPIRIIAPGRVYRNDYDQTHTPMFHQMEGLIVDTNISFTNLKGTLHDFLRNFFEEDLQIRFRPSYFPFTEPSAEVDVMGKNGKWLEVLGCGMVHPNVLRNVGIDPEVYSGFAFGMGMERLTMLRYGVTDLRSFFENDLRFLKQFK</sequence>
<evidence type="ECO:0000255" key="1">
    <source>
        <dbReference type="HAMAP-Rule" id="MF_00281"/>
    </source>
</evidence>
<dbReference type="EC" id="6.1.1.20" evidence="1"/>
<dbReference type="EMBL" id="CU928164">
    <property type="protein sequence ID" value="CAR17473.1"/>
    <property type="molecule type" value="Genomic_DNA"/>
</dbReference>
<dbReference type="RefSeq" id="WP_000018588.1">
    <property type="nucleotide sequence ID" value="NC_011750.1"/>
</dbReference>
<dbReference type="RefSeq" id="YP_002407347.1">
    <property type="nucleotide sequence ID" value="NC_011750.1"/>
</dbReference>
<dbReference type="SMR" id="B7NT62"/>
<dbReference type="STRING" id="585057.ECIAI39_1339"/>
<dbReference type="GeneID" id="86946239"/>
<dbReference type="KEGG" id="ect:ECIAI39_1339"/>
<dbReference type="PATRIC" id="fig|585057.6.peg.1401"/>
<dbReference type="HOGENOM" id="CLU_025086_0_1_6"/>
<dbReference type="Proteomes" id="UP000000749">
    <property type="component" value="Chromosome"/>
</dbReference>
<dbReference type="GO" id="GO:0005737">
    <property type="term" value="C:cytoplasm"/>
    <property type="evidence" value="ECO:0007669"/>
    <property type="project" value="UniProtKB-SubCell"/>
</dbReference>
<dbReference type="GO" id="GO:0005524">
    <property type="term" value="F:ATP binding"/>
    <property type="evidence" value="ECO:0007669"/>
    <property type="project" value="UniProtKB-UniRule"/>
</dbReference>
<dbReference type="GO" id="GO:0000287">
    <property type="term" value="F:magnesium ion binding"/>
    <property type="evidence" value="ECO:0007669"/>
    <property type="project" value="UniProtKB-UniRule"/>
</dbReference>
<dbReference type="GO" id="GO:0004826">
    <property type="term" value="F:phenylalanine-tRNA ligase activity"/>
    <property type="evidence" value="ECO:0007669"/>
    <property type="project" value="UniProtKB-UniRule"/>
</dbReference>
<dbReference type="GO" id="GO:0000049">
    <property type="term" value="F:tRNA binding"/>
    <property type="evidence" value="ECO:0007669"/>
    <property type="project" value="InterPro"/>
</dbReference>
<dbReference type="GO" id="GO:0006432">
    <property type="term" value="P:phenylalanyl-tRNA aminoacylation"/>
    <property type="evidence" value="ECO:0007669"/>
    <property type="project" value="UniProtKB-UniRule"/>
</dbReference>
<dbReference type="CDD" id="cd00496">
    <property type="entry name" value="PheRS_alpha_core"/>
    <property type="match status" value="1"/>
</dbReference>
<dbReference type="FunFam" id="3.30.930.10:FF:000003">
    <property type="entry name" value="Phenylalanine--tRNA ligase alpha subunit"/>
    <property type="match status" value="1"/>
</dbReference>
<dbReference type="Gene3D" id="3.30.930.10">
    <property type="entry name" value="Bira Bifunctional Protein, Domain 2"/>
    <property type="match status" value="1"/>
</dbReference>
<dbReference type="HAMAP" id="MF_00281">
    <property type="entry name" value="Phe_tRNA_synth_alpha1"/>
    <property type="match status" value="1"/>
</dbReference>
<dbReference type="InterPro" id="IPR006195">
    <property type="entry name" value="aa-tRNA-synth_II"/>
</dbReference>
<dbReference type="InterPro" id="IPR045864">
    <property type="entry name" value="aa-tRNA-synth_II/BPL/LPL"/>
</dbReference>
<dbReference type="InterPro" id="IPR004529">
    <property type="entry name" value="Phe-tRNA-synth_IIc_asu"/>
</dbReference>
<dbReference type="InterPro" id="IPR004188">
    <property type="entry name" value="Phe-tRNA_ligase_II_N"/>
</dbReference>
<dbReference type="InterPro" id="IPR022911">
    <property type="entry name" value="Phe_tRNA_ligase_alpha1_bac"/>
</dbReference>
<dbReference type="InterPro" id="IPR002319">
    <property type="entry name" value="Phenylalanyl-tRNA_Synthase"/>
</dbReference>
<dbReference type="InterPro" id="IPR010978">
    <property type="entry name" value="tRNA-bd_arm"/>
</dbReference>
<dbReference type="NCBIfam" id="TIGR00468">
    <property type="entry name" value="pheS"/>
    <property type="match status" value="1"/>
</dbReference>
<dbReference type="PANTHER" id="PTHR11538:SF41">
    <property type="entry name" value="PHENYLALANINE--TRNA LIGASE, MITOCHONDRIAL"/>
    <property type="match status" value="1"/>
</dbReference>
<dbReference type="PANTHER" id="PTHR11538">
    <property type="entry name" value="PHENYLALANYL-TRNA SYNTHETASE"/>
    <property type="match status" value="1"/>
</dbReference>
<dbReference type="Pfam" id="PF02912">
    <property type="entry name" value="Phe_tRNA-synt_N"/>
    <property type="match status" value="1"/>
</dbReference>
<dbReference type="Pfam" id="PF01409">
    <property type="entry name" value="tRNA-synt_2d"/>
    <property type="match status" value="1"/>
</dbReference>
<dbReference type="SUPFAM" id="SSF55681">
    <property type="entry name" value="Class II aaRS and biotin synthetases"/>
    <property type="match status" value="1"/>
</dbReference>
<dbReference type="SUPFAM" id="SSF46589">
    <property type="entry name" value="tRNA-binding arm"/>
    <property type="match status" value="1"/>
</dbReference>
<dbReference type="PROSITE" id="PS50862">
    <property type="entry name" value="AA_TRNA_LIGASE_II"/>
    <property type="match status" value="1"/>
</dbReference>
<keyword id="KW-0030">Aminoacyl-tRNA synthetase</keyword>
<keyword id="KW-0067">ATP-binding</keyword>
<keyword id="KW-0963">Cytoplasm</keyword>
<keyword id="KW-0436">Ligase</keyword>
<keyword id="KW-0460">Magnesium</keyword>
<keyword id="KW-0479">Metal-binding</keyword>
<keyword id="KW-0547">Nucleotide-binding</keyword>
<keyword id="KW-0648">Protein biosynthesis</keyword>